<protein>
    <recommendedName>
        <fullName>Common pilus major fimbrillin subunit EcpA</fullName>
    </recommendedName>
    <alternativeName>
        <fullName>MatB fimbrillin</fullName>
    </alternativeName>
</protein>
<proteinExistence type="inferred from homology"/>
<accession>A7ZI27</accession>
<keyword id="KW-0281">Fimbrium</keyword>
<keyword id="KW-1185">Reference proteome</keyword>
<keyword id="KW-0732">Signal</keyword>
<gene>
    <name type="primary">ecpA</name>
    <name type="synonym">matB</name>
    <name type="ordered locus">EcE24377A_0303</name>
</gene>
<name>ECPA_ECO24</name>
<dbReference type="EMBL" id="CP000800">
    <property type="protein sequence ID" value="ABV17389.1"/>
    <property type="molecule type" value="Genomic_DNA"/>
</dbReference>
<dbReference type="RefSeq" id="WP_000730974.1">
    <property type="nucleotide sequence ID" value="NC_009801.1"/>
</dbReference>
<dbReference type="SMR" id="A7ZI27"/>
<dbReference type="GeneID" id="75170261"/>
<dbReference type="KEGG" id="ecw:EcE24377A_0303"/>
<dbReference type="HOGENOM" id="CLU_120328_0_0_6"/>
<dbReference type="Proteomes" id="UP000001122">
    <property type="component" value="Chromosome"/>
</dbReference>
<dbReference type="GO" id="GO:0009289">
    <property type="term" value="C:pilus"/>
    <property type="evidence" value="ECO:0007669"/>
    <property type="project" value="UniProtKB-SubCell"/>
</dbReference>
<dbReference type="Gene3D" id="2.60.40.3290">
    <property type="entry name" value="Fimbrial protein EcpA"/>
    <property type="match status" value="1"/>
</dbReference>
<dbReference type="InterPro" id="IPR016514">
    <property type="entry name" value="EcpA"/>
</dbReference>
<dbReference type="InterPro" id="IPR038478">
    <property type="entry name" value="Fimbrillin_EcpA_sf"/>
</dbReference>
<dbReference type="Pfam" id="PF16449">
    <property type="entry name" value="MatB"/>
    <property type="match status" value="1"/>
</dbReference>
<dbReference type="PIRSF" id="PIRSF007320">
    <property type="entry name" value="Fimbrillin_MatB"/>
    <property type="match status" value="1"/>
</dbReference>
<reference key="1">
    <citation type="journal article" date="2008" name="J. Bacteriol.">
        <title>The pangenome structure of Escherichia coli: comparative genomic analysis of E. coli commensal and pathogenic isolates.</title>
        <authorList>
            <person name="Rasko D.A."/>
            <person name="Rosovitz M.J."/>
            <person name="Myers G.S.A."/>
            <person name="Mongodin E.F."/>
            <person name="Fricke W.F."/>
            <person name="Gajer P."/>
            <person name="Crabtree J."/>
            <person name="Sebaihia M."/>
            <person name="Thomson N.R."/>
            <person name="Chaudhuri R."/>
            <person name="Henderson I.R."/>
            <person name="Sperandio V."/>
            <person name="Ravel J."/>
        </authorList>
    </citation>
    <scope>NUCLEOTIDE SEQUENCE [LARGE SCALE GENOMIC DNA]</scope>
    <source>
        <strain>E24377A / ETEC</strain>
    </source>
</reference>
<comment type="function">
    <text evidence="1">Part of the ecpRABCDE operon, which encodes the E.coli common pilus (ECP). ECP is found in both commensal and pathogenic strains and plays a dual role in early-stage biofilm development and host cell recognition. Major subunit of the fimbria (By similarity).</text>
</comment>
<comment type="subunit">
    <text evidence="1">Self-associates. Forms filaments. Interacts with EcpD (By similarity).</text>
</comment>
<comment type="subcellular location">
    <subcellularLocation>
        <location evidence="1">Fimbrium</location>
    </subcellularLocation>
</comment>
<comment type="induction">
    <text evidence="1">Negatively regulated by H-NS. Positively regulated by IHF and EcpR (By similarity).</text>
</comment>
<comment type="similarity">
    <text evidence="3">Belongs to the EcpA/MatB fimbrillin family.</text>
</comment>
<evidence type="ECO:0000250" key="1"/>
<evidence type="ECO:0000255" key="2"/>
<evidence type="ECO:0000305" key="3"/>
<organism>
    <name type="scientific">Escherichia coli O139:H28 (strain E24377A / ETEC)</name>
    <dbReference type="NCBI Taxonomy" id="331111"/>
    <lineage>
        <taxon>Bacteria</taxon>
        <taxon>Pseudomonadati</taxon>
        <taxon>Pseudomonadota</taxon>
        <taxon>Gammaproteobacteria</taxon>
        <taxon>Enterobacterales</taxon>
        <taxon>Enterobacteriaceae</taxon>
        <taxon>Escherichia</taxon>
    </lineage>
</organism>
<sequence length="195" mass="20125">MKKKVLAIALVTVFTGMGVAQAADVTAQAVATWSATAKKDTTSKLVVTPLGSLAFQYAEGIKGFNSQKGLFDVAIEGDSTATAFKLTSRLITNTLTQLDTSGSTLNVGVDYNGAAVEKTGDTVMIDTANGVLGGNLSPLANGYNASNRTTAQDGFTFTIISGTTNGTTAVTDYSTLPEGIWSGDVSVQFDATWTS</sequence>
<feature type="signal peptide" evidence="2">
    <location>
        <begin position="1"/>
        <end position="22"/>
    </location>
</feature>
<feature type="chain" id="PRO_0000367926" description="Common pilus major fimbrillin subunit EcpA">
    <location>
        <begin position="23"/>
        <end position="195"/>
    </location>
</feature>